<gene>
    <name type="ORF">CBG11706</name>
</gene>
<dbReference type="EMBL" id="HE601289">
    <property type="protein sequence ID" value="CAP30867.1"/>
    <property type="molecule type" value="Genomic_DNA"/>
</dbReference>
<dbReference type="RefSeq" id="XP_002640963.1">
    <property type="nucleotide sequence ID" value="XM_002640917.1"/>
</dbReference>
<dbReference type="SMR" id="A8XDX2"/>
<dbReference type="FunCoup" id="A8XDX2">
    <property type="interactions" value="1252"/>
</dbReference>
<dbReference type="STRING" id="6238.A8XDX2"/>
<dbReference type="EnsemblMetazoa" id="CBG11706.1">
    <property type="protein sequence ID" value="CBG11706.1"/>
    <property type="gene ID" value="WBGene00032789"/>
</dbReference>
<dbReference type="GeneID" id="8582957"/>
<dbReference type="KEGG" id="cbr:CBG_11706"/>
<dbReference type="CTD" id="8582957"/>
<dbReference type="WormBase" id="CBG11706">
    <property type="protein sequence ID" value="CBP02857"/>
    <property type="gene ID" value="WBGene00032789"/>
</dbReference>
<dbReference type="eggNOG" id="KOG3025">
    <property type="taxonomic scope" value="Eukaryota"/>
</dbReference>
<dbReference type="HOGENOM" id="CLU_116822_2_0_1"/>
<dbReference type="InParanoid" id="A8XDX2"/>
<dbReference type="OMA" id="CMGFCIL"/>
<dbReference type="OrthoDB" id="438052at2759"/>
<dbReference type="Proteomes" id="UP000008549">
    <property type="component" value="Unassembled WGS sequence"/>
</dbReference>
<dbReference type="GO" id="GO:0031966">
    <property type="term" value="C:mitochondrial membrane"/>
    <property type="evidence" value="ECO:0007669"/>
    <property type="project" value="UniProtKB-SubCell"/>
</dbReference>
<dbReference type="GO" id="GO:0045259">
    <property type="term" value="C:proton-transporting ATP synthase complex"/>
    <property type="evidence" value="ECO:0007669"/>
    <property type="project" value="UniProtKB-KW"/>
</dbReference>
<dbReference type="GO" id="GO:0033177">
    <property type="term" value="C:proton-transporting two-sector ATPase complex, proton-transporting domain"/>
    <property type="evidence" value="ECO:0007669"/>
    <property type="project" value="InterPro"/>
</dbReference>
<dbReference type="GO" id="GO:0008289">
    <property type="term" value="F:lipid binding"/>
    <property type="evidence" value="ECO:0007669"/>
    <property type="project" value="UniProtKB-KW"/>
</dbReference>
<dbReference type="GO" id="GO:0015078">
    <property type="term" value="F:proton transmembrane transporter activity"/>
    <property type="evidence" value="ECO:0007669"/>
    <property type="project" value="InterPro"/>
</dbReference>
<dbReference type="GO" id="GO:0015986">
    <property type="term" value="P:proton motive force-driven ATP synthesis"/>
    <property type="evidence" value="ECO:0000318"/>
    <property type="project" value="GO_Central"/>
</dbReference>
<dbReference type="CDD" id="cd18182">
    <property type="entry name" value="ATP-synt_Fo_c_ATP5G3"/>
    <property type="match status" value="1"/>
</dbReference>
<dbReference type="FunFam" id="1.20.20.10:FF:000003">
    <property type="entry name" value="Atp synthase f complex subunit mitochondrial"/>
    <property type="match status" value="1"/>
</dbReference>
<dbReference type="Gene3D" id="1.20.20.10">
    <property type="entry name" value="F1F0 ATP synthase subunit C"/>
    <property type="match status" value="1"/>
</dbReference>
<dbReference type="HAMAP" id="MF_01396">
    <property type="entry name" value="ATP_synth_c_bact"/>
    <property type="match status" value="1"/>
</dbReference>
<dbReference type="InterPro" id="IPR000454">
    <property type="entry name" value="ATP_synth_F0_csu"/>
</dbReference>
<dbReference type="InterPro" id="IPR020537">
    <property type="entry name" value="ATP_synth_F0_csu_DDCD_BS"/>
</dbReference>
<dbReference type="InterPro" id="IPR038662">
    <property type="entry name" value="ATP_synth_F0_csu_sf"/>
</dbReference>
<dbReference type="InterPro" id="IPR002379">
    <property type="entry name" value="ATPase_proteolipid_c-like_dom"/>
</dbReference>
<dbReference type="InterPro" id="IPR035921">
    <property type="entry name" value="F/V-ATP_Csub_sf"/>
</dbReference>
<dbReference type="PANTHER" id="PTHR10031">
    <property type="entry name" value="ATP SYNTHASE LIPID-BINDING PROTEIN, MITOCHONDRIAL"/>
    <property type="match status" value="1"/>
</dbReference>
<dbReference type="PANTHER" id="PTHR10031:SF0">
    <property type="entry name" value="ATPASE PROTEIN 9"/>
    <property type="match status" value="1"/>
</dbReference>
<dbReference type="Pfam" id="PF00137">
    <property type="entry name" value="ATP-synt_C"/>
    <property type="match status" value="1"/>
</dbReference>
<dbReference type="PRINTS" id="PR00124">
    <property type="entry name" value="ATPASEC"/>
</dbReference>
<dbReference type="SUPFAM" id="SSF81333">
    <property type="entry name" value="F1F0 ATP synthase subunit C"/>
    <property type="match status" value="1"/>
</dbReference>
<dbReference type="PROSITE" id="PS00605">
    <property type="entry name" value="ATPASE_C"/>
    <property type="match status" value="1"/>
</dbReference>
<organism>
    <name type="scientific">Caenorhabditis briggsae</name>
    <dbReference type="NCBI Taxonomy" id="6238"/>
    <lineage>
        <taxon>Eukaryota</taxon>
        <taxon>Metazoa</taxon>
        <taxon>Ecdysozoa</taxon>
        <taxon>Nematoda</taxon>
        <taxon>Chromadorea</taxon>
        <taxon>Rhabditida</taxon>
        <taxon>Rhabditina</taxon>
        <taxon>Rhabditomorpha</taxon>
        <taxon>Rhabditoidea</taxon>
        <taxon>Rhabditidae</taxon>
        <taxon>Peloderinae</taxon>
        <taxon>Caenorhabditis</taxon>
    </lineage>
</organism>
<proteinExistence type="inferred from homology"/>
<protein>
    <recommendedName>
        <fullName>ATP synthase lipid-binding protein, mitochondrial</fullName>
    </recommendedName>
    <alternativeName>
        <fullName>ATPase protein 9</fullName>
    </alternativeName>
    <alternativeName>
        <fullName>ATPase subunit c</fullName>
    </alternativeName>
</protein>
<sequence length="116" mass="12108">MYCQRLALPLTRSLLASRAPLALRMENAVAARMISTTVARKDIDSAAKYIGAGAATVGVAGSGAGIGNVFGALVIGYARNPSLKQQLFSYAILGFALSEAMGLFCLTMGFMILFAL</sequence>
<feature type="transit peptide" description="Mitochondrion" evidence="4">
    <location>
        <begin position="1"/>
        <end position="24"/>
    </location>
</feature>
<feature type="chain" id="PRO_0000399029" description="ATP synthase lipid-binding protein, mitochondrial">
    <location>
        <begin position="25"/>
        <end position="116"/>
    </location>
</feature>
<feature type="transmembrane region" description="Helical" evidence="4">
    <location>
        <begin position="57"/>
        <end position="77"/>
    </location>
</feature>
<feature type="transmembrane region" description="Helical" evidence="4">
    <location>
        <begin position="92"/>
        <end position="112"/>
    </location>
</feature>
<feature type="site" description="Reversibly protonated during proton transport" evidence="1">
    <location>
        <position position="99"/>
    </location>
</feature>
<feature type="modified residue" description="N6,N6,N6-trimethyllysine" evidence="2">
    <location>
        <position position="84"/>
    </location>
</feature>
<keyword id="KW-0138">CF(0)</keyword>
<keyword id="KW-0375">Hydrogen ion transport</keyword>
<keyword id="KW-0406">Ion transport</keyword>
<keyword id="KW-0446">Lipid-binding</keyword>
<keyword id="KW-0472">Membrane</keyword>
<keyword id="KW-0488">Methylation</keyword>
<keyword id="KW-0496">Mitochondrion</keyword>
<keyword id="KW-1185">Reference proteome</keyword>
<keyword id="KW-0809">Transit peptide</keyword>
<keyword id="KW-0812">Transmembrane</keyword>
<keyword id="KW-1133">Transmembrane helix</keyword>
<keyword id="KW-0813">Transport</keyword>
<comment type="function">
    <text evidence="3">Mitochondrial membrane ATP synthase (F(1)F(0) ATP synthase or Complex V) produces ATP from ADP in the presence of a proton gradient across the membrane which is generated by electron transport complexes of the respiratory chain. F-type ATPases consist of two structural domains, F(1) - containing the extramembraneous catalytic core and F(0) - containing the membrane proton channel, linked together by a central stalk and a peripheral stalk. During catalysis, ATP synthesis in the catalytic domain of F(1) is coupled via a rotary mechanism of the central stalk subunits to proton translocation. Part of the complex F(0) domain. A homomeric c-ring of probably 10 subunits is part of the complex rotary element (By similarity).</text>
</comment>
<comment type="subunit">
    <text evidence="3">F-type ATPases have 2 components, CF(1) - the catalytic core - and CF(0) - the membrane proton channel. CF(1) has five subunits: alpha(3), beta(3), gamma(1), delta(1), epsilon(1). CF(0) has three main subunits: a, b and c (By similarity).</text>
</comment>
<comment type="subcellular location">
    <subcellularLocation>
        <location evidence="3">Mitochondrion membrane</location>
        <topology evidence="3">Multi-pass membrane protein</topology>
    </subcellularLocation>
</comment>
<comment type="PTM">
    <text evidence="2">Trimethylated by ATPSCKMT at Lys-84. Methylation may be required for proper incorporation of the C subunit into the ATP synthase complex and mitochondrial respiration.</text>
</comment>
<comment type="similarity">
    <text evidence="4">Belongs to the ATPase C chain family.</text>
</comment>
<name>AT5G_CAEBR</name>
<reference evidence="5" key="1">
    <citation type="journal article" date="2003" name="PLoS Biol.">
        <title>The genome sequence of Caenorhabditis briggsae: a platform for comparative genomics.</title>
        <authorList>
            <person name="Stein L.D."/>
            <person name="Bao Z."/>
            <person name="Blasiar D."/>
            <person name="Blumenthal T."/>
            <person name="Brent M.R."/>
            <person name="Chen N."/>
            <person name="Chinwalla A."/>
            <person name="Clarke L."/>
            <person name="Clee C."/>
            <person name="Coghlan A."/>
            <person name="Coulson A."/>
            <person name="D'Eustachio P."/>
            <person name="Fitch D.H.A."/>
            <person name="Fulton L.A."/>
            <person name="Fulton R.E."/>
            <person name="Griffiths-Jones S."/>
            <person name="Harris T.W."/>
            <person name="Hillier L.W."/>
            <person name="Kamath R."/>
            <person name="Kuwabara P.E."/>
            <person name="Mardis E.R."/>
            <person name="Marra M.A."/>
            <person name="Miner T.L."/>
            <person name="Minx P."/>
            <person name="Mullikin J.C."/>
            <person name="Plumb R.W."/>
            <person name="Rogers J."/>
            <person name="Schein J.E."/>
            <person name="Sohrmann M."/>
            <person name="Spieth J."/>
            <person name="Stajich J.E."/>
            <person name="Wei C."/>
            <person name="Willey D."/>
            <person name="Wilson R.K."/>
            <person name="Durbin R.M."/>
            <person name="Waterston R.H."/>
        </authorList>
    </citation>
    <scope>NUCLEOTIDE SEQUENCE [LARGE SCALE GENOMIC DNA]</scope>
    <source>
        <strain>AF16</strain>
    </source>
</reference>
<accession>A8XDX2</accession>
<evidence type="ECO:0000250" key="1">
    <source>
        <dbReference type="UniProtKB" id="P00845"/>
    </source>
</evidence>
<evidence type="ECO:0000250" key="2">
    <source>
        <dbReference type="UniProtKB" id="P05496"/>
    </source>
</evidence>
<evidence type="ECO:0000250" key="3">
    <source>
        <dbReference type="UniProtKB" id="Q06645"/>
    </source>
</evidence>
<evidence type="ECO:0000255" key="4"/>
<evidence type="ECO:0000312" key="5">
    <source>
        <dbReference type="EMBL" id="CAP30867.1"/>
    </source>
</evidence>